<name>ANMK_THIDA</name>
<protein>
    <recommendedName>
        <fullName evidence="1">Anhydro-N-acetylmuramic acid kinase</fullName>
        <ecNumber evidence="1">2.7.1.170</ecNumber>
    </recommendedName>
    <alternativeName>
        <fullName evidence="1">AnhMurNAc kinase</fullName>
    </alternativeName>
</protein>
<gene>
    <name evidence="1" type="primary">anmK</name>
    <name type="ordered locus">Tbd_0457</name>
</gene>
<keyword id="KW-0067">ATP-binding</keyword>
<keyword id="KW-0119">Carbohydrate metabolism</keyword>
<keyword id="KW-0418">Kinase</keyword>
<keyword id="KW-0547">Nucleotide-binding</keyword>
<keyword id="KW-1185">Reference proteome</keyword>
<keyword id="KW-0808">Transferase</keyword>
<dbReference type="EC" id="2.7.1.170" evidence="1"/>
<dbReference type="EMBL" id="CP000116">
    <property type="protein sequence ID" value="AAZ96410.1"/>
    <property type="molecule type" value="Genomic_DNA"/>
</dbReference>
<dbReference type="RefSeq" id="WP_011310969.1">
    <property type="nucleotide sequence ID" value="NC_007404.1"/>
</dbReference>
<dbReference type="SMR" id="Q3SLK0"/>
<dbReference type="STRING" id="292415.Tbd_0457"/>
<dbReference type="KEGG" id="tbd:Tbd_0457"/>
<dbReference type="eggNOG" id="COG2377">
    <property type="taxonomic scope" value="Bacteria"/>
</dbReference>
<dbReference type="HOGENOM" id="CLU_038782_0_0_4"/>
<dbReference type="OrthoDB" id="9763949at2"/>
<dbReference type="UniPathway" id="UPA00343"/>
<dbReference type="UniPathway" id="UPA00544"/>
<dbReference type="Proteomes" id="UP000008291">
    <property type="component" value="Chromosome"/>
</dbReference>
<dbReference type="GO" id="GO:0005524">
    <property type="term" value="F:ATP binding"/>
    <property type="evidence" value="ECO:0007669"/>
    <property type="project" value="UniProtKB-UniRule"/>
</dbReference>
<dbReference type="GO" id="GO:0016301">
    <property type="term" value="F:kinase activity"/>
    <property type="evidence" value="ECO:0007669"/>
    <property type="project" value="UniProtKB-KW"/>
</dbReference>
<dbReference type="GO" id="GO:0016773">
    <property type="term" value="F:phosphotransferase activity, alcohol group as acceptor"/>
    <property type="evidence" value="ECO:0007669"/>
    <property type="project" value="UniProtKB-UniRule"/>
</dbReference>
<dbReference type="GO" id="GO:0097175">
    <property type="term" value="P:1,6-anhydro-N-acetyl-beta-muramic acid catabolic process"/>
    <property type="evidence" value="ECO:0007669"/>
    <property type="project" value="UniProtKB-UniRule"/>
</dbReference>
<dbReference type="GO" id="GO:0006040">
    <property type="term" value="P:amino sugar metabolic process"/>
    <property type="evidence" value="ECO:0007669"/>
    <property type="project" value="InterPro"/>
</dbReference>
<dbReference type="GO" id="GO:0009254">
    <property type="term" value="P:peptidoglycan turnover"/>
    <property type="evidence" value="ECO:0007669"/>
    <property type="project" value="UniProtKB-UniRule"/>
</dbReference>
<dbReference type="CDD" id="cd24050">
    <property type="entry name" value="ASKHA_NBD_ANMK"/>
    <property type="match status" value="1"/>
</dbReference>
<dbReference type="Gene3D" id="3.30.420.40">
    <property type="match status" value="2"/>
</dbReference>
<dbReference type="HAMAP" id="MF_01270">
    <property type="entry name" value="AnhMurNAc_kinase"/>
    <property type="match status" value="1"/>
</dbReference>
<dbReference type="InterPro" id="IPR005338">
    <property type="entry name" value="Anhydro_N_Ac-Mur_kinase"/>
</dbReference>
<dbReference type="InterPro" id="IPR043129">
    <property type="entry name" value="ATPase_NBD"/>
</dbReference>
<dbReference type="NCBIfam" id="NF007139">
    <property type="entry name" value="PRK09585.1-3"/>
    <property type="match status" value="1"/>
</dbReference>
<dbReference type="PANTHER" id="PTHR30605">
    <property type="entry name" value="ANHYDRO-N-ACETYLMURAMIC ACID KINASE"/>
    <property type="match status" value="1"/>
</dbReference>
<dbReference type="PANTHER" id="PTHR30605:SF0">
    <property type="entry name" value="ANHYDRO-N-ACETYLMURAMIC ACID KINASE"/>
    <property type="match status" value="1"/>
</dbReference>
<dbReference type="Pfam" id="PF03702">
    <property type="entry name" value="AnmK"/>
    <property type="match status" value="1"/>
</dbReference>
<dbReference type="SUPFAM" id="SSF53067">
    <property type="entry name" value="Actin-like ATPase domain"/>
    <property type="match status" value="1"/>
</dbReference>
<proteinExistence type="inferred from homology"/>
<accession>Q3SLK0</accession>
<organism>
    <name type="scientific">Thiobacillus denitrificans (strain ATCC 25259 / T1)</name>
    <dbReference type="NCBI Taxonomy" id="292415"/>
    <lineage>
        <taxon>Bacteria</taxon>
        <taxon>Pseudomonadati</taxon>
        <taxon>Pseudomonadota</taxon>
        <taxon>Betaproteobacteria</taxon>
        <taxon>Nitrosomonadales</taxon>
        <taxon>Thiobacillaceae</taxon>
        <taxon>Thiobacillus</taxon>
    </lineage>
</organism>
<comment type="function">
    <text evidence="1">Catalyzes the specific phosphorylation of 1,6-anhydro-N-acetylmuramic acid (anhMurNAc) with the simultaneous cleavage of the 1,6-anhydro ring, generating MurNAc-6-P. Is required for the utilization of anhMurNAc either imported from the medium or derived from its own cell wall murein, and thus plays a role in cell wall recycling.</text>
</comment>
<comment type="catalytic activity">
    <reaction evidence="1">
        <text>1,6-anhydro-N-acetyl-beta-muramate + ATP + H2O = N-acetyl-D-muramate 6-phosphate + ADP + H(+)</text>
        <dbReference type="Rhea" id="RHEA:24952"/>
        <dbReference type="ChEBI" id="CHEBI:15377"/>
        <dbReference type="ChEBI" id="CHEBI:15378"/>
        <dbReference type="ChEBI" id="CHEBI:30616"/>
        <dbReference type="ChEBI" id="CHEBI:58690"/>
        <dbReference type="ChEBI" id="CHEBI:58722"/>
        <dbReference type="ChEBI" id="CHEBI:456216"/>
        <dbReference type="EC" id="2.7.1.170"/>
    </reaction>
</comment>
<comment type="pathway">
    <text evidence="1">Amino-sugar metabolism; 1,6-anhydro-N-acetylmuramate degradation.</text>
</comment>
<comment type="pathway">
    <text evidence="1">Cell wall biogenesis; peptidoglycan recycling.</text>
</comment>
<comment type="similarity">
    <text evidence="1">Belongs to the anhydro-N-acetylmuramic acid kinase family.</text>
</comment>
<feature type="chain" id="PRO_0000250075" description="Anhydro-N-acetylmuramic acid kinase">
    <location>
        <begin position="1"/>
        <end position="372"/>
    </location>
</feature>
<feature type="binding site" evidence="1">
    <location>
        <begin position="18"/>
        <end position="25"/>
    </location>
    <ligand>
        <name>ATP</name>
        <dbReference type="ChEBI" id="CHEBI:30616"/>
    </ligand>
</feature>
<sequence length="372" mass="39371">MSAVPTHEAEPYVGLMSGTSLDGIDAVLAEIGTGNQVRLLRTRYIHYPDDLRAQLLALHTPQADEVHLAALAANALARLYAEAVGALLEGIDPAKIRAIGCHGQTLRHRPGDGYTIQIGNASLLAELAGIAVVSDFRSRDIAAGGQGAPLVPAFHARVLAHPEIHRVIANVGGIANITDLPPNGPIRGWDTGPGNMLMDAWIHRHQGSRYDRDGSWAAEGSVAAGLLQALLRHPYLEQRPPKSAGREQFNLESLDTTLAGLGQRLEPGTVQATLLEFTAVSLCDAVTQECRGAQELYVCGGGAHNGALMRRIAALLPHVRVTTTADLGIDPDWVEALAFAWLARQTMHGEAGNLPAVTGACGERILGAIHPA</sequence>
<evidence type="ECO:0000255" key="1">
    <source>
        <dbReference type="HAMAP-Rule" id="MF_01270"/>
    </source>
</evidence>
<reference key="1">
    <citation type="journal article" date="2006" name="J. Bacteriol.">
        <title>The genome sequence of the obligately chemolithoautotrophic, facultatively anaerobic bacterium Thiobacillus denitrificans.</title>
        <authorList>
            <person name="Beller H.R."/>
            <person name="Chain P.S."/>
            <person name="Letain T.E."/>
            <person name="Chakicherla A."/>
            <person name="Larimer F.W."/>
            <person name="Richardson P.M."/>
            <person name="Coleman M.A."/>
            <person name="Wood A.P."/>
            <person name="Kelly D.P."/>
        </authorList>
    </citation>
    <scope>NUCLEOTIDE SEQUENCE [LARGE SCALE GENOMIC DNA]</scope>
    <source>
        <strain>ATCC 25259 / T1</strain>
    </source>
</reference>